<feature type="chain" id="PRO_1000216192" description="HTH-type transcriptional regulator Hpr">
    <location>
        <begin position="1"/>
        <end position="201"/>
    </location>
</feature>
<feature type="domain" description="HTH marR-type" evidence="1">
    <location>
        <begin position="13"/>
        <end position="157"/>
    </location>
</feature>
<feature type="DNA-binding region" description="H-T-H motif" evidence="1">
    <location>
        <begin position="63"/>
        <end position="86"/>
    </location>
</feature>
<sequence>MKTTEQNYSIKEAMLFSQRIAQLSKALWKSIEKDWQQWIKPFDLNINEHHILWIAYHFKGASISEIAKFGVMHVSTAFNFSKKLEERGLLSFSKKQDDKRNTYIELTEKGEEVLLKLMESYDPTQNAVFNGALPLRELYGKFPEILEMMCIIRNIYGDDFMEIFERAFENIKNDFVEQDGKLVKRNAKSQEKEKELTSQSS</sequence>
<reference key="1">
    <citation type="submission" date="2009-06" db="EMBL/GenBank/DDBJ databases">
        <title>Complete sequence of chromosome of Geopacillus sp. WCH70.</title>
        <authorList>
            <consortium name="US DOE Joint Genome Institute"/>
            <person name="Lucas S."/>
            <person name="Copeland A."/>
            <person name="Lapidus A."/>
            <person name="Glavina del Rio T."/>
            <person name="Dalin E."/>
            <person name="Tice H."/>
            <person name="Bruce D."/>
            <person name="Goodwin L."/>
            <person name="Pitluck S."/>
            <person name="Chertkov O."/>
            <person name="Brettin T."/>
            <person name="Detter J.C."/>
            <person name="Han C."/>
            <person name="Larimer F."/>
            <person name="Land M."/>
            <person name="Hauser L."/>
            <person name="Kyrpides N."/>
            <person name="Mikhailova N."/>
            <person name="Brumm P."/>
            <person name="Mead D.A."/>
            <person name="Richardson P."/>
        </authorList>
    </citation>
    <scope>NUCLEOTIDE SEQUENCE [LARGE SCALE GENOMIC DNA]</scope>
    <source>
        <strain>WCH70</strain>
    </source>
</reference>
<proteinExistence type="inferred from homology"/>
<gene>
    <name evidence="1" type="primary">hpr</name>
    <name type="ordered locus">GWCH70_0640</name>
</gene>
<name>HPR_GEOSW</name>
<organism>
    <name type="scientific">Geobacillus sp. (strain WCH70)</name>
    <dbReference type="NCBI Taxonomy" id="471223"/>
    <lineage>
        <taxon>Bacteria</taxon>
        <taxon>Bacillati</taxon>
        <taxon>Bacillota</taxon>
        <taxon>Bacilli</taxon>
        <taxon>Bacillales</taxon>
        <taxon>Anoxybacillaceae</taxon>
        <taxon>Geobacillus</taxon>
    </lineage>
</organism>
<protein>
    <recommendedName>
        <fullName evidence="1">HTH-type transcriptional regulator Hpr</fullName>
    </recommendedName>
    <alternativeName>
        <fullName evidence="1">Protease production regulatory protein Hpr</fullName>
    </alternativeName>
</protein>
<evidence type="ECO:0000255" key="1">
    <source>
        <dbReference type="HAMAP-Rule" id="MF_01911"/>
    </source>
</evidence>
<accession>C5D6L6</accession>
<keyword id="KW-0238">DNA-binding</keyword>
<keyword id="KW-0678">Repressor</keyword>
<keyword id="KW-0749">Sporulation</keyword>
<keyword id="KW-0804">Transcription</keyword>
<keyword id="KW-0805">Transcription regulation</keyword>
<dbReference type="EMBL" id="CP001638">
    <property type="protein sequence ID" value="ACS23533.1"/>
    <property type="molecule type" value="Genomic_DNA"/>
</dbReference>
<dbReference type="SMR" id="C5D6L6"/>
<dbReference type="STRING" id="471223.GWCH70_0640"/>
<dbReference type="KEGG" id="gwc:GWCH70_0640"/>
<dbReference type="eggNOG" id="COG1846">
    <property type="taxonomic scope" value="Bacteria"/>
</dbReference>
<dbReference type="HOGENOM" id="CLU_115790_0_0_9"/>
<dbReference type="GO" id="GO:0003677">
    <property type="term" value="F:DNA binding"/>
    <property type="evidence" value="ECO:0007669"/>
    <property type="project" value="UniProtKB-UniRule"/>
</dbReference>
<dbReference type="GO" id="GO:0003700">
    <property type="term" value="F:DNA-binding transcription factor activity"/>
    <property type="evidence" value="ECO:0007669"/>
    <property type="project" value="UniProtKB-UniRule"/>
</dbReference>
<dbReference type="GO" id="GO:0045892">
    <property type="term" value="P:negative regulation of DNA-templated transcription"/>
    <property type="evidence" value="ECO:0007669"/>
    <property type="project" value="UniProtKB-UniRule"/>
</dbReference>
<dbReference type="GO" id="GO:0006950">
    <property type="term" value="P:response to stress"/>
    <property type="evidence" value="ECO:0007669"/>
    <property type="project" value="TreeGrafter"/>
</dbReference>
<dbReference type="GO" id="GO:0030435">
    <property type="term" value="P:sporulation resulting in formation of a cellular spore"/>
    <property type="evidence" value="ECO:0007669"/>
    <property type="project" value="UniProtKB-UniRule"/>
</dbReference>
<dbReference type="FunFam" id="1.10.10.10:FF:000194">
    <property type="entry name" value="HTH-type transcriptional regulator Hpr"/>
    <property type="match status" value="1"/>
</dbReference>
<dbReference type="Gene3D" id="1.10.10.10">
    <property type="entry name" value="Winged helix-like DNA-binding domain superfamily/Winged helix DNA-binding domain"/>
    <property type="match status" value="1"/>
</dbReference>
<dbReference type="HAMAP" id="MF_01911">
    <property type="entry name" value="HTH_type_Hpr"/>
    <property type="match status" value="1"/>
</dbReference>
<dbReference type="InterPro" id="IPR000835">
    <property type="entry name" value="HTH_MarR-typ"/>
</dbReference>
<dbReference type="InterPro" id="IPR023488">
    <property type="entry name" value="HTH_tscrpt_reg_Hpr"/>
</dbReference>
<dbReference type="InterPro" id="IPR039422">
    <property type="entry name" value="MarR/SlyA-like"/>
</dbReference>
<dbReference type="InterPro" id="IPR023187">
    <property type="entry name" value="Tscrpt_reg_MarR-type_CS"/>
</dbReference>
<dbReference type="InterPro" id="IPR036388">
    <property type="entry name" value="WH-like_DNA-bd_sf"/>
</dbReference>
<dbReference type="InterPro" id="IPR036390">
    <property type="entry name" value="WH_DNA-bd_sf"/>
</dbReference>
<dbReference type="NCBIfam" id="NF010349">
    <property type="entry name" value="PRK13777.1"/>
    <property type="match status" value="1"/>
</dbReference>
<dbReference type="PANTHER" id="PTHR33164:SF58">
    <property type="entry name" value="DNA-BINDING TRANSCRIPTIONAL REPRESSOR SCOC"/>
    <property type="match status" value="1"/>
</dbReference>
<dbReference type="PANTHER" id="PTHR33164">
    <property type="entry name" value="TRANSCRIPTIONAL REGULATOR, MARR FAMILY"/>
    <property type="match status" value="1"/>
</dbReference>
<dbReference type="Pfam" id="PF01047">
    <property type="entry name" value="MarR"/>
    <property type="match status" value="1"/>
</dbReference>
<dbReference type="SMART" id="SM00347">
    <property type="entry name" value="HTH_MARR"/>
    <property type="match status" value="1"/>
</dbReference>
<dbReference type="SUPFAM" id="SSF46785">
    <property type="entry name" value="Winged helix' DNA-binding domain"/>
    <property type="match status" value="1"/>
</dbReference>
<dbReference type="PROSITE" id="PS01117">
    <property type="entry name" value="HTH_MARR_1"/>
    <property type="match status" value="1"/>
</dbReference>
<dbReference type="PROSITE" id="PS50995">
    <property type="entry name" value="HTH_MARR_2"/>
    <property type="match status" value="1"/>
</dbReference>
<comment type="function">
    <text evidence="1">Negative regulator of protease production and sporulation.</text>
</comment>
<comment type="subunit">
    <text evidence="1">Homodimer.</text>
</comment>